<keyword id="KW-0378">Hydrolase</keyword>
<keyword id="KW-0546">Nucleotide metabolism</keyword>
<keyword id="KW-0547">Nucleotide-binding</keyword>
<keyword id="KW-1185">Reference proteome</keyword>
<gene>
    <name evidence="1" type="primary">dcd</name>
    <name type="ordered locus">SF2129</name>
    <name type="ordered locus">S2253</name>
</gene>
<sequence length="193" mass="21221">MRLCDRDIEAWLDEGRLSINPRPPVERINGATVDVRLGNKFRTFRGHTAAFIDLSGPKDEVSAALDRVMSDEIVLDEGEAFYLHPGELALAVTLESVTLPADLVGWLDGRSSLARLGLMVHVTAHRIDPGWSGCIVLEFYNSGKLPLALRPGMLIGALSFEPLSGPAARPYNRREDAKYRNQQGAVASRIDKD</sequence>
<proteinExistence type="inferred from homology"/>
<name>DCD_SHIFL</name>
<comment type="function">
    <text evidence="1">Catalyzes the deamination of dCTP to dUTP.</text>
</comment>
<comment type="catalytic activity">
    <reaction evidence="1">
        <text>dCTP + H2O + H(+) = dUTP + NH4(+)</text>
        <dbReference type="Rhea" id="RHEA:22680"/>
        <dbReference type="ChEBI" id="CHEBI:15377"/>
        <dbReference type="ChEBI" id="CHEBI:15378"/>
        <dbReference type="ChEBI" id="CHEBI:28938"/>
        <dbReference type="ChEBI" id="CHEBI:61481"/>
        <dbReference type="ChEBI" id="CHEBI:61555"/>
        <dbReference type="EC" id="3.5.4.13"/>
    </reaction>
</comment>
<comment type="pathway">
    <text evidence="1">Pyrimidine metabolism; dUMP biosynthesis; dUMP from dCTP (dUTP route): step 1/2.</text>
</comment>
<comment type="subunit">
    <text evidence="1">Homotrimer.</text>
</comment>
<comment type="similarity">
    <text evidence="1">Belongs to the dCTP deaminase family.</text>
</comment>
<evidence type="ECO:0000255" key="1">
    <source>
        <dbReference type="HAMAP-Rule" id="MF_00146"/>
    </source>
</evidence>
<evidence type="ECO:0000256" key="2">
    <source>
        <dbReference type="SAM" id="MobiDB-lite"/>
    </source>
</evidence>
<reference key="1">
    <citation type="journal article" date="2002" name="Nucleic Acids Res.">
        <title>Genome sequence of Shigella flexneri 2a: insights into pathogenicity through comparison with genomes of Escherichia coli K12 and O157.</title>
        <authorList>
            <person name="Jin Q."/>
            <person name="Yuan Z."/>
            <person name="Xu J."/>
            <person name="Wang Y."/>
            <person name="Shen Y."/>
            <person name="Lu W."/>
            <person name="Wang J."/>
            <person name="Liu H."/>
            <person name="Yang J."/>
            <person name="Yang F."/>
            <person name="Zhang X."/>
            <person name="Zhang J."/>
            <person name="Yang G."/>
            <person name="Wu H."/>
            <person name="Qu D."/>
            <person name="Dong J."/>
            <person name="Sun L."/>
            <person name="Xue Y."/>
            <person name="Zhao A."/>
            <person name="Gao Y."/>
            <person name="Zhu J."/>
            <person name="Kan B."/>
            <person name="Ding K."/>
            <person name="Chen S."/>
            <person name="Cheng H."/>
            <person name="Yao Z."/>
            <person name="He B."/>
            <person name="Chen R."/>
            <person name="Ma D."/>
            <person name="Qiang B."/>
            <person name="Wen Y."/>
            <person name="Hou Y."/>
            <person name="Yu J."/>
        </authorList>
    </citation>
    <scope>NUCLEOTIDE SEQUENCE [LARGE SCALE GENOMIC DNA]</scope>
    <source>
        <strain>301 / Serotype 2a</strain>
    </source>
</reference>
<reference key="2">
    <citation type="journal article" date="2003" name="Infect. Immun.">
        <title>Complete genome sequence and comparative genomics of Shigella flexneri serotype 2a strain 2457T.</title>
        <authorList>
            <person name="Wei J."/>
            <person name="Goldberg M.B."/>
            <person name="Burland V."/>
            <person name="Venkatesan M.M."/>
            <person name="Deng W."/>
            <person name="Fournier G."/>
            <person name="Mayhew G.F."/>
            <person name="Plunkett G. III"/>
            <person name="Rose D.J."/>
            <person name="Darling A."/>
            <person name="Mau B."/>
            <person name="Perna N.T."/>
            <person name="Payne S.M."/>
            <person name="Runyen-Janecky L.J."/>
            <person name="Zhou S."/>
            <person name="Schwartz D.C."/>
            <person name="Blattner F.R."/>
        </authorList>
    </citation>
    <scope>NUCLEOTIDE SEQUENCE [LARGE SCALE GENOMIC DNA]</scope>
    <source>
        <strain>ATCC 700930 / 2457T / Serotype 2a</strain>
    </source>
</reference>
<feature type="chain" id="PRO_0000156013" description="dCTP deaminase">
    <location>
        <begin position="1"/>
        <end position="193"/>
    </location>
</feature>
<feature type="region of interest" description="Disordered" evidence="2">
    <location>
        <begin position="169"/>
        <end position="193"/>
    </location>
</feature>
<feature type="active site" description="Proton donor/acceptor" evidence="1">
    <location>
        <position position="138"/>
    </location>
</feature>
<feature type="binding site" evidence="1">
    <location>
        <begin position="110"/>
        <end position="115"/>
    </location>
    <ligand>
        <name>dCTP</name>
        <dbReference type="ChEBI" id="CHEBI:61481"/>
    </ligand>
</feature>
<feature type="binding site" evidence="1">
    <location>
        <position position="128"/>
    </location>
    <ligand>
        <name>dCTP</name>
        <dbReference type="ChEBI" id="CHEBI:61481"/>
    </ligand>
</feature>
<feature type="binding site" evidence="1">
    <location>
        <begin position="136"/>
        <end position="138"/>
    </location>
    <ligand>
        <name>dCTP</name>
        <dbReference type="ChEBI" id="CHEBI:61481"/>
    </ligand>
</feature>
<feature type="binding site" evidence="1">
    <location>
        <position position="171"/>
    </location>
    <ligand>
        <name>dCTP</name>
        <dbReference type="ChEBI" id="CHEBI:61481"/>
    </ligand>
</feature>
<feature type="binding site" evidence="1">
    <location>
        <position position="178"/>
    </location>
    <ligand>
        <name>dCTP</name>
        <dbReference type="ChEBI" id="CHEBI:61481"/>
    </ligand>
</feature>
<feature type="binding site" evidence="1">
    <location>
        <position position="182"/>
    </location>
    <ligand>
        <name>dCTP</name>
        <dbReference type="ChEBI" id="CHEBI:61481"/>
    </ligand>
</feature>
<dbReference type="EC" id="3.5.4.13" evidence="1"/>
<dbReference type="EMBL" id="AE005674">
    <property type="protein sequence ID" value="AAN43666.1"/>
    <property type="molecule type" value="Genomic_DNA"/>
</dbReference>
<dbReference type="EMBL" id="AE014073">
    <property type="protein sequence ID" value="AAP17494.1"/>
    <property type="molecule type" value="Genomic_DNA"/>
</dbReference>
<dbReference type="RefSeq" id="NP_707959.1">
    <property type="nucleotide sequence ID" value="NC_004337.2"/>
</dbReference>
<dbReference type="RefSeq" id="WP_001234767.1">
    <property type="nucleotide sequence ID" value="NZ_WPGW01000038.1"/>
</dbReference>
<dbReference type="SMR" id="Q83QZ5"/>
<dbReference type="STRING" id="198214.SF2129"/>
<dbReference type="PaxDb" id="198214-SF2129"/>
<dbReference type="GeneID" id="1025350"/>
<dbReference type="GeneID" id="93775126"/>
<dbReference type="KEGG" id="sfl:SF2129"/>
<dbReference type="KEGG" id="sfx:S2253"/>
<dbReference type="PATRIC" id="fig|198214.7.peg.2539"/>
<dbReference type="HOGENOM" id="CLU_087476_2_0_6"/>
<dbReference type="UniPathway" id="UPA00610">
    <property type="reaction ID" value="UER00665"/>
</dbReference>
<dbReference type="Proteomes" id="UP000001006">
    <property type="component" value="Chromosome"/>
</dbReference>
<dbReference type="Proteomes" id="UP000002673">
    <property type="component" value="Chromosome"/>
</dbReference>
<dbReference type="GO" id="GO:0008829">
    <property type="term" value="F:dCTP deaminase activity"/>
    <property type="evidence" value="ECO:0007669"/>
    <property type="project" value="UniProtKB-UniRule"/>
</dbReference>
<dbReference type="GO" id="GO:0000166">
    <property type="term" value="F:nucleotide binding"/>
    <property type="evidence" value="ECO:0007669"/>
    <property type="project" value="UniProtKB-KW"/>
</dbReference>
<dbReference type="GO" id="GO:0006226">
    <property type="term" value="P:dUMP biosynthetic process"/>
    <property type="evidence" value="ECO:0007669"/>
    <property type="project" value="UniProtKB-UniPathway"/>
</dbReference>
<dbReference type="GO" id="GO:0006229">
    <property type="term" value="P:dUTP biosynthetic process"/>
    <property type="evidence" value="ECO:0007669"/>
    <property type="project" value="UniProtKB-UniRule"/>
</dbReference>
<dbReference type="GO" id="GO:0015949">
    <property type="term" value="P:nucleobase-containing small molecule interconversion"/>
    <property type="evidence" value="ECO:0007669"/>
    <property type="project" value="TreeGrafter"/>
</dbReference>
<dbReference type="CDD" id="cd07557">
    <property type="entry name" value="trimeric_dUTPase"/>
    <property type="match status" value="1"/>
</dbReference>
<dbReference type="FunFam" id="2.70.40.10:FF:000003">
    <property type="entry name" value="dCTP deaminase"/>
    <property type="match status" value="1"/>
</dbReference>
<dbReference type="Gene3D" id="2.70.40.10">
    <property type="match status" value="1"/>
</dbReference>
<dbReference type="HAMAP" id="MF_00146">
    <property type="entry name" value="dCTP_deaminase"/>
    <property type="match status" value="1"/>
</dbReference>
<dbReference type="InterPro" id="IPR011962">
    <property type="entry name" value="dCTP_deaminase"/>
</dbReference>
<dbReference type="InterPro" id="IPR036157">
    <property type="entry name" value="dUTPase-like_sf"/>
</dbReference>
<dbReference type="InterPro" id="IPR033704">
    <property type="entry name" value="dUTPase_trimeric"/>
</dbReference>
<dbReference type="NCBIfam" id="TIGR02274">
    <property type="entry name" value="dCTP_deam"/>
    <property type="match status" value="1"/>
</dbReference>
<dbReference type="PANTHER" id="PTHR42680">
    <property type="entry name" value="DCTP DEAMINASE"/>
    <property type="match status" value="1"/>
</dbReference>
<dbReference type="PANTHER" id="PTHR42680:SF3">
    <property type="entry name" value="DCTP DEAMINASE"/>
    <property type="match status" value="1"/>
</dbReference>
<dbReference type="Pfam" id="PF22769">
    <property type="entry name" value="DCD"/>
    <property type="match status" value="1"/>
</dbReference>
<dbReference type="SUPFAM" id="SSF51283">
    <property type="entry name" value="dUTPase-like"/>
    <property type="match status" value="1"/>
</dbReference>
<accession>Q83QZ5</accession>
<organism>
    <name type="scientific">Shigella flexneri</name>
    <dbReference type="NCBI Taxonomy" id="623"/>
    <lineage>
        <taxon>Bacteria</taxon>
        <taxon>Pseudomonadati</taxon>
        <taxon>Pseudomonadota</taxon>
        <taxon>Gammaproteobacteria</taxon>
        <taxon>Enterobacterales</taxon>
        <taxon>Enterobacteriaceae</taxon>
        <taxon>Shigella</taxon>
    </lineage>
</organism>
<protein>
    <recommendedName>
        <fullName evidence="1">dCTP deaminase</fullName>
        <ecNumber evidence="1">3.5.4.13</ecNumber>
    </recommendedName>
    <alternativeName>
        <fullName evidence="1">Deoxycytidine triphosphate deaminase</fullName>
    </alternativeName>
</protein>